<organism>
    <name type="scientific">Xanthomonas campestris pv. campestris (strain ATCC 33913 / DSM 3586 / NCPPB 528 / LMG 568 / P 25)</name>
    <dbReference type="NCBI Taxonomy" id="190485"/>
    <lineage>
        <taxon>Bacteria</taxon>
        <taxon>Pseudomonadati</taxon>
        <taxon>Pseudomonadota</taxon>
        <taxon>Gammaproteobacteria</taxon>
        <taxon>Lysobacterales</taxon>
        <taxon>Lysobacteraceae</taxon>
        <taxon>Xanthomonas</taxon>
    </lineage>
</organism>
<protein>
    <recommendedName>
        <fullName evidence="1">Serine hydroxymethyltransferase</fullName>
        <shortName evidence="1">SHMT</shortName>
        <shortName evidence="1">Serine methylase</shortName>
        <ecNumber evidence="1">2.1.2.1</ecNumber>
    </recommendedName>
</protein>
<reference key="1">
    <citation type="journal article" date="2002" name="Nature">
        <title>Comparison of the genomes of two Xanthomonas pathogens with differing host specificities.</title>
        <authorList>
            <person name="da Silva A.C.R."/>
            <person name="Ferro J.A."/>
            <person name="Reinach F.C."/>
            <person name="Farah C.S."/>
            <person name="Furlan L.R."/>
            <person name="Quaggio R.B."/>
            <person name="Monteiro-Vitorello C.B."/>
            <person name="Van Sluys M.A."/>
            <person name="Almeida N.F. Jr."/>
            <person name="Alves L.M.C."/>
            <person name="do Amaral A.M."/>
            <person name="Bertolini M.C."/>
            <person name="Camargo L.E.A."/>
            <person name="Camarotte G."/>
            <person name="Cannavan F."/>
            <person name="Cardozo J."/>
            <person name="Chambergo F."/>
            <person name="Ciapina L.P."/>
            <person name="Cicarelli R.M.B."/>
            <person name="Coutinho L.L."/>
            <person name="Cursino-Santos J.R."/>
            <person name="El-Dorry H."/>
            <person name="Faria J.B."/>
            <person name="Ferreira A.J.S."/>
            <person name="Ferreira R.C.C."/>
            <person name="Ferro M.I.T."/>
            <person name="Formighieri E.F."/>
            <person name="Franco M.C."/>
            <person name="Greggio C.C."/>
            <person name="Gruber A."/>
            <person name="Katsuyama A.M."/>
            <person name="Kishi L.T."/>
            <person name="Leite R.P."/>
            <person name="Lemos E.G.M."/>
            <person name="Lemos M.V.F."/>
            <person name="Locali E.C."/>
            <person name="Machado M.A."/>
            <person name="Madeira A.M.B.N."/>
            <person name="Martinez-Rossi N.M."/>
            <person name="Martins E.C."/>
            <person name="Meidanis J."/>
            <person name="Menck C.F.M."/>
            <person name="Miyaki C.Y."/>
            <person name="Moon D.H."/>
            <person name="Moreira L.M."/>
            <person name="Novo M.T.M."/>
            <person name="Okura V.K."/>
            <person name="Oliveira M.C."/>
            <person name="Oliveira V.R."/>
            <person name="Pereira H.A."/>
            <person name="Rossi A."/>
            <person name="Sena J.A.D."/>
            <person name="Silva C."/>
            <person name="de Souza R.F."/>
            <person name="Spinola L.A.F."/>
            <person name="Takita M.A."/>
            <person name="Tamura R.E."/>
            <person name="Teixeira E.C."/>
            <person name="Tezza R.I.D."/>
            <person name="Trindade dos Santos M."/>
            <person name="Truffi D."/>
            <person name="Tsai S.M."/>
            <person name="White F.F."/>
            <person name="Setubal J.C."/>
            <person name="Kitajima J.P."/>
        </authorList>
    </citation>
    <scope>NUCLEOTIDE SEQUENCE [LARGE SCALE GENOMIC DNA]</scope>
    <source>
        <strain>ATCC 33913 / DSM 3586 / NCPPB 528 / LMG 568 / P 25</strain>
    </source>
</reference>
<proteinExistence type="inferred from homology"/>
<keyword id="KW-0028">Amino-acid biosynthesis</keyword>
<keyword id="KW-0963">Cytoplasm</keyword>
<keyword id="KW-0554">One-carbon metabolism</keyword>
<keyword id="KW-0663">Pyridoxal phosphate</keyword>
<keyword id="KW-1185">Reference proteome</keyword>
<keyword id="KW-0808">Transferase</keyword>
<evidence type="ECO:0000255" key="1">
    <source>
        <dbReference type="HAMAP-Rule" id="MF_00051"/>
    </source>
</evidence>
<name>GLYA_XANCP</name>
<dbReference type="EC" id="2.1.2.1" evidence="1"/>
<dbReference type="EMBL" id="AE008922">
    <property type="protein sequence ID" value="AAM40006.1"/>
    <property type="molecule type" value="Genomic_DNA"/>
</dbReference>
<dbReference type="RefSeq" id="NP_636082.1">
    <property type="nucleotide sequence ID" value="NC_003902.1"/>
</dbReference>
<dbReference type="RefSeq" id="WP_011035930.1">
    <property type="nucleotide sequence ID" value="NC_003902.1"/>
</dbReference>
<dbReference type="SMR" id="Q8PCN4"/>
<dbReference type="STRING" id="190485.XCC0690"/>
<dbReference type="EnsemblBacteria" id="AAM40006">
    <property type="protein sequence ID" value="AAM40006"/>
    <property type="gene ID" value="XCC0690"/>
</dbReference>
<dbReference type="KEGG" id="xcc:XCC0690"/>
<dbReference type="PATRIC" id="fig|190485.4.peg.755"/>
<dbReference type="eggNOG" id="COG0112">
    <property type="taxonomic scope" value="Bacteria"/>
</dbReference>
<dbReference type="HOGENOM" id="CLU_022477_2_1_6"/>
<dbReference type="OrthoDB" id="9803846at2"/>
<dbReference type="UniPathway" id="UPA00193"/>
<dbReference type="UniPathway" id="UPA00288">
    <property type="reaction ID" value="UER01023"/>
</dbReference>
<dbReference type="Proteomes" id="UP000001010">
    <property type="component" value="Chromosome"/>
</dbReference>
<dbReference type="GO" id="GO:0005737">
    <property type="term" value="C:cytoplasm"/>
    <property type="evidence" value="ECO:0000318"/>
    <property type="project" value="GO_Central"/>
</dbReference>
<dbReference type="GO" id="GO:0005829">
    <property type="term" value="C:cytosol"/>
    <property type="evidence" value="ECO:0000318"/>
    <property type="project" value="GO_Central"/>
</dbReference>
<dbReference type="GO" id="GO:0004372">
    <property type="term" value="F:glycine hydroxymethyltransferase activity"/>
    <property type="evidence" value="ECO:0000318"/>
    <property type="project" value="GO_Central"/>
</dbReference>
<dbReference type="GO" id="GO:0030170">
    <property type="term" value="F:pyridoxal phosphate binding"/>
    <property type="evidence" value="ECO:0000318"/>
    <property type="project" value="GO_Central"/>
</dbReference>
<dbReference type="GO" id="GO:0019264">
    <property type="term" value="P:glycine biosynthetic process from serine"/>
    <property type="evidence" value="ECO:0000318"/>
    <property type="project" value="GO_Central"/>
</dbReference>
<dbReference type="GO" id="GO:0035999">
    <property type="term" value="P:tetrahydrofolate interconversion"/>
    <property type="evidence" value="ECO:0007669"/>
    <property type="project" value="UniProtKB-UniRule"/>
</dbReference>
<dbReference type="GO" id="GO:0046653">
    <property type="term" value="P:tetrahydrofolate metabolic process"/>
    <property type="evidence" value="ECO:0000318"/>
    <property type="project" value="GO_Central"/>
</dbReference>
<dbReference type="CDD" id="cd00378">
    <property type="entry name" value="SHMT"/>
    <property type="match status" value="1"/>
</dbReference>
<dbReference type="FunFam" id="3.40.640.10:FF:000001">
    <property type="entry name" value="Serine hydroxymethyltransferase"/>
    <property type="match status" value="1"/>
</dbReference>
<dbReference type="FunFam" id="3.90.1150.10:FF:000003">
    <property type="entry name" value="Serine hydroxymethyltransferase"/>
    <property type="match status" value="1"/>
</dbReference>
<dbReference type="Gene3D" id="3.90.1150.10">
    <property type="entry name" value="Aspartate Aminotransferase, domain 1"/>
    <property type="match status" value="1"/>
</dbReference>
<dbReference type="Gene3D" id="3.40.640.10">
    <property type="entry name" value="Type I PLP-dependent aspartate aminotransferase-like (Major domain)"/>
    <property type="match status" value="1"/>
</dbReference>
<dbReference type="HAMAP" id="MF_00051">
    <property type="entry name" value="SHMT"/>
    <property type="match status" value="1"/>
</dbReference>
<dbReference type="InterPro" id="IPR015424">
    <property type="entry name" value="PyrdxlP-dep_Trfase"/>
</dbReference>
<dbReference type="InterPro" id="IPR015421">
    <property type="entry name" value="PyrdxlP-dep_Trfase_major"/>
</dbReference>
<dbReference type="InterPro" id="IPR015422">
    <property type="entry name" value="PyrdxlP-dep_Trfase_small"/>
</dbReference>
<dbReference type="InterPro" id="IPR001085">
    <property type="entry name" value="Ser_HO-MeTrfase"/>
</dbReference>
<dbReference type="InterPro" id="IPR049943">
    <property type="entry name" value="Ser_HO-MeTrfase-like"/>
</dbReference>
<dbReference type="InterPro" id="IPR019798">
    <property type="entry name" value="Ser_HO-MeTrfase_PLP_BS"/>
</dbReference>
<dbReference type="InterPro" id="IPR039429">
    <property type="entry name" value="SHMT-like_dom"/>
</dbReference>
<dbReference type="NCBIfam" id="NF000586">
    <property type="entry name" value="PRK00011.1"/>
    <property type="match status" value="1"/>
</dbReference>
<dbReference type="PANTHER" id="PTHR11680">
    <property type="entry name" value="SERINE HYDROXYMETHYLTRANSFERASE"/>
    <property type="match status" value="1"/>
</dbReference>
<dbReference type="PANTHER" id="PTHR11680:SF50">
    <property type="entry name" value="SERINE HYDROXYMETHYLTRANSFERASE"/>
    <property type="match status" value="1"/>
</dbReference>
<dbReference type="Pfam" id="PF00464">
    <property type="entry name" value="SHMT"/>
    <property type="match status" value="1"/>
</dbReference>
<dbReference type="PIRSF" id="PIRSF000412">
    <property type="entry name" value="SHMT"/>
    <property type="match status" value="1"/>
</dbReference>
<dbReference type="SUPFAM" id="SSF53383">
    <property type="entry name" value="PLP-dependent transferases"/>
    <property type="match status" value="1"/>
</dbReference>
<dbReference type="PROSITE" id="PS00096">
    <property type="entry name" value="SHMT"/>
    <property type="match status" value="1"/>
</dbReference>
<comment type="function">
    <text evidence="1">Catalyzes the reversible interconversion of serine and glycine with tetrahydrofolate (THF) serving as the one-carbon carrier. This reaction serves as the major source of one-carbon groups required for the biosynthesis of purines, thymidylate, methionine, and other important biomolecules. Also exhibits THF-independent aldolase activity toward beta-hydroxyamino acids, producing glycine and aldehydes, via a retro-aldol mechanism.</text>
</comment>
<comment type="catalytic activity">
    <reaction evidence="1">
        <text>(6R)-5,10-methylene-5,6,7,8-tetrahydrofolate + glycine + H2O = (6S)-5,6,7,8-tetrahydrofolate + L-serine</text>
        <dbReference type="Rhea" id="RHEA:15481"/>
        <dbReference type="ChEBI" id="CHEBI:15377"/>
        <dbReference type="ChEBI" id="CHEBI:15636"/>
        <dbReference type="ChEBI" id="CHEBI:33384"/>
        <dbReference type="ChEBI" id="CHEBI:57305"/>
        <dbReference type="ChEBI" id="CHEBI:57453"/>
        <dbReference type="EC" id="2.1.2.1"/>
    </reaction>
</comment>
<comment type="cofactor">
    <cofactor evidence="1">
        <name>pyridoxal 5'-phosphate</name>
        <dbReference type="ChEBI" id="CHEBI:597326"/>
    </cofactor>
</comment>
<comment type="pathway">
    <text evidence="1">One-carbon metabolism; tetrahydrofolate interconversion.</text>
</comment>
<comment type="pathway">
    <text evidence="1">Amino-acid biosynthesis; glycine biosynthesis; glycine from L-serine: step 1/1.</text>
</comment>
<comment type="subunit">
    <text evidence="1">Homodimer.</text>
</comment>
<comment type="subcellular location">
    <subcellularLocation>
        <location evidence="1">Cytoplasm</location>
    </subcellularLocation>
</comment>
<comment type="similarity">
    <text evidence="1">Belongs to the SHMT family.</text>
</comment>
<feature type="chain" id="PRO_0000113702" description="Serine hydroxymethyltransferase">
    <location>
        <begin position="1"/>
        <end position="417"/>
    </location>
</feature>
<feature type="binding site" evidence="1">
    <location>
        <position position="121"/>
    </location>
    <ligand>
        <name>(6S)-5,6,7,8-tetrahydrofolate</name>
        <dbReference type="ChEBI" id="CHEBI:57453"/>
    </ligand>
</feature>
<feature type="binding site" evidence="1">
    <location>
        <begin position="125"/>
        <end position="127"/>
    </location>
    <ligand>
        <name>(6S)-5,6,7,8-tetrahydrofolate</name>
        <dbReference type="ChEBI" id="CHEBI:57453"/>
    </ligand>
</feature>
<feature type="binding site" evidence="1">
    <location>
        <begin position="355"/>
        <end position="357"/>
    </location>
    <ligand>
        <name>(6S)-5,6,7,8-tetrahydrofolate</name>
        <dbReference type="ChEBI" id="CHEBI:57453"/>
    </ligand>
</feature>
<feature type="site" description="Plays an important role in substrate specificity" evidence="1">
    <location>
        <position position="228"/>
    </location>
</feature>
<feature type="modified residue" description="N6-(pyridoxal phosphate)lysine" evidence="1">
    <location>
        <position position="229"/>
    </location>
</feature>
<sequence length="417" mass="44870">MFSRDVRLETYDPELAKAIAAEAGRQEDHVELIASENYCSPLVMEAQGSQLTNKYAEGYPGKRYYGGCEFVDIAEQLAIDRIKQVFGADYANVQPHSGSQANQAVYLALLQPGDTILGMSLAHGGHLTHGAKVNASGKLFNAVQYGVNEQGLIDYDEVQRLATEHKPKMVIAGFSAYSQKIDWARFRAIADSVGAYLFVDMAHVAGLVAAGVYPSPMDHAHVVTSTTHKTLRGPRGGIILAKGAGEDLVKKLQSIVFPGIQGGPLMHVIAAKAVAFKEALEPEFKTYQQQVVKNAQAMANTLIARGYKIVSGGTENHLMLVDMIGRDVSGKDAEAALGKAHITVNKNSVPNDPRSPFVTSGLRLGTPAITTRGYQEQDCVDLANWIADVLDAPADDAVLAKVRDAVTAQCKKYPVYG</sequence>
<accession>Q8PCN4</accession>
<gene>
    <name evidence="1" type="primary">glyA</name>
    <name type="ordered locus">XCC0690</name>
</gene>